<name>Y2119_KLEP3</name>
<gene>
    <name type="ordered locus">KPK_2119</name>
</gene>
<feature type="chain" id="PRO_1000131711" description="Putative double-stranded DNA mimic protein KPK_2119">
    <location>
        <begin position="1"/>
        <end position="109"/>
    </location>
</feature>
<protein>
    <recommendedName>
        <fullName evidence="1">Putative double-stranded DNA mimic protein KPK_2119</fullName>
    </recommendedName>
</protein>
<organism>
    <name type="scientific">Klebsiella pneumoniae (strain 342)</name>
    <dbReference type="NCBI Taxonomy" id="507522"/>
    <lineage>
        <taxon>Bacteria</taxon>
        <taxon>Pseudomonadati</taxon>
        <taxon>Pseudomonadota</taxon>
        <taxon>Gammaproteobacteria</taxon>
        <taxon>Enterobacterales</taxon>
        <taxon>Enterobacteriaceae</taxon>
        <taxon>Klebsiella/Raoultella group</taxon>
        <taxon>Klebsiella</taxon>
        <taxon>Klebsiella pneumoniae complex</taxon>
    </lineage>
</organism>
<reference key="1">
    <citation type="journal article" date="2008" name="PLoS Genet.">
        <title>Complete genome sequence of the N2-fixing broad host range endophyte Klebsiella pneumoniae 342 and virulence predictions verified in mice.</title>
        <authorList>
            <person name="Fouts D.E."/>
            <person name="Tyler H.L."/>
            <person name="DeBoy R.T."/>
            <person name="Daugherty S."/>
            <person name="Ren Q."/>
            <person name="Badger J.H."/>
            <person name="Durkin A.S."/>
            <person name="Huot H."/>
            <person name="Shrivastava S."/>
            <person name="Kothari S."/>
            <person name="Dodson R.J."/>
            <person name="Mohamoud Y."/>
            <person name="Khouri H."/>
            <person name="Roesch L.F.W."/>
            <person name="Krogfelt K.A."/>
            <person name="Struve C."/>
            <person name="Triplett E.W."/>
            <person name="Methe B.A."/>
        </authorList>
    </citation>
    <scope>NUCLEOTIDE SEQUENCE [LARGE SCALE GENOMIC DNA]</scope>
    <source>
        <strain>342</strain>
    </source>
</reference>
<comment type="function">
    <text evidence="1">May act as a double-stranded DNA (dsDNA) mimic. Probably regulates the activity of a dsDNA-binding protein.</text>
</comment>
<comment type="similarity">
    <text evidence="1">Belongs to the putative dsDNA mimic protein family.</text>
</comment>
<accession>B5XQA8</accession>
<dbReference type="EMBL" id="CP000964">
    <property type="protein sequence ID" value="ACI07186.1"/>
    <property type="molecule type" value="Genomic_DNA"/>
</dbReference>
<dbReference type="SMR" id="B5XQA8"/>
<dbReference type="KEGG" id="kpe:KPK_2119"/>
<dbReference type="HOGENOM" id="CLU_143392_0_0_6"/>
<dbReference type="BioCyc" id="KPNE507522:GI0B-2113-MONOMER"/>
<dbReference type="Proteomes" id="UP000001734">
    <property type="component" value="Chromosome"/>
</dbReference>
<dbReference type="Gene3D" id="3.10.450.140">
    <property type="entry name" value="dsDNA mimic, putative"/>
    <property type="match status" value="1"/>
</dbReference>
<dbReference type="HAMAP" id="MF_00680">
    <property type="entry name" value="Put_dsDNA_mimic"/>
    <property type="match status" value="1"/>
</dbReference>
<dbReference type="InterPro" id="IPR007376">
    <property type="entry name" value="dsDNA_mimic_put"/>
</dbReference>
<dbReference type="InterPro" id="IPR036763">
    <property type="entry name" value="Put_dsDNA_mimic_sf"/>
</dbReference>
<dbReference type="NCBIfam" id="NF003469">
    <property type="entry name" value="PRK05094.1"/>
    <property type="match status" value="1"/>
</dbReference>
<dbReference type="Pfam" id="PF04269">
    <property type="entry name" value="DUF440"/>
    <property type="match status" value="1"/>
</dbReference>
<dbReference type="PIRSF" id="PIRSF004916">
    <property type="entry name" value="UCP004916"/>
    <property type="match status" value="1"/>
</dbReference>
<dbReference type="SUPFAM" id="SSF102816">
    <property type="entry name" value="Putative dsDNA mimic"/>
    <property type="match status" value="1"/>
</dbReference>
<sequence>MDMDLNNRLTEDETLEQAYDIFLELAADNLDPADIILFNLQFEERGGAELFDPSADWEEHVDYDLNPDFFAEVVIGLADTDGGEINDIFARVLLCREKDHKLCHILWRE</sequence>
<evidence type="ECO:0000255" key="1">
    <source>
        <dbReference type="HAMAP-Rule" id="MF_00680"/>
    </source>
</evidence>
<proteinExistence type="inferred from homology"/>